<name>LEC4_SCOPL</name>
<keyword id="KW-0903">Direct protein sequencing</keyword>
<keyword id="KW-1015">Disulfide bond</keyword>
<keyword id="KW-0348">Hemagglutinin</keyword>
<keyword id="KW-0430">Lectin</keyword>
<keyword id="KW-0964">Secreted</keyword>
<dbReference type="SMR" id="P0DQV8"/>
<dbReference type="GO" id="GO:0005576">
    <property type="term" value="C:extracellular region"/>
    <property type="evidence" value="ECO:0007669"/>
    <property type="project" value="UniProtKB-SubCell"/>
</dbReference>
<dbReference type="GO" id="GO:0030246">
    <property type="term" value="F:carbohydrate binding"/>
    <property type="evidence" value="ECO:0007669"/>
    <property type="project" value="UniProtKB-KW"/>
</dbReference>
<dbReference type="CDD" id="cd00037">
    <property type="entry name" value="CLECT"/>
    <property type="match status" value="1"/>
</dbReference>
<dbReference type="Gene3D" id="3.10.100.10">
    <property type="entry name" value="Mannose-Binding Protein A, subunit A"/>
    <property type="match status" value="1"/>
</dbReference>
<dbReference type="InterPro" id="IPR001304">
    <property type="entry name" value="C-type_lectin-like"/>
</dbReference>
<dbReference type="InterPro" id="IPR016186">
    <property type="entry name" value="C-type_lectin-like/link_sf"/>
</dbReference>
<dbReference type="InterPro" id="IPR050111">
    <property type="entry name" value="C-type_lectin/snaclec_domain"/>
</dbReference>
<dbReference type="InterPro" id="IPR018378">
    <property type="entry name" value="C-type_lectin_CS"/>
</dbReference>
<dbReference type="InterPro" id="IPR016187">
    <property type="entry name" value="CTDL_fold"/>
</dbReference>
<dbReference type="PANTHER" id="PTHR22803">
    <property type="entry name" value="MANNOSE, PHOSPHOLIPASE, LECTIN RECEPTOR RELATED"/>
    <property type="match status" value="1"/>
</dbReference>
<dbReference type="Pfam" id="PF00059">
    <property type="entry name" value="Lectin_C"/>
    <property type="match status" value="1"/>
</dbReference>
<dbReference type="SMART" id="SM00034">
    <property type="entry name" value="CLECT"/>
    <property type="match status" value="1"/>
</dbReference>
<dbReference type="SUPFAM" id="SSF56436">
    <property type="entry name" value="C-type lectin-like"/>
    <property type="match status" value="1"/>
</dbReference>
<dbReference type="PROSITE" id="PS00615">
    <property type="entry name" value="C_TYPE_LECTIN_1"/>
    <property type="match status" value="1"/>
</dbReference>
<dbReference type="PROSITE" id="PS50041">
    <property type="entry name" value="C_TYPE_LECTIN_2"/>
    <property type="match status" value="1"/>
</dbReference>
<proteinExistence type="evidence at protein level"/>
<feature type="chain" id="PRO_0000457051" description="C-type isolectin Sp-CL4" evidence="2">
    <location>
        <begin position="1"/>
        <end position="144"/>
    </location>
</feature>
<feature type="domain" description="C-type lectin" evidence="1">
    <location>
        <begin position="27"/>
        <end position="144"/>
    </location>
</feature>
<feature type="disulfide bond" evidence="1">
    <location>
        <begin position="48"/>
        <end position="143"/>
    </location>
</feature>
<feature type="disulfide bond" evidence="1">
    <location>
        <begin position="119"/>
        <end position="135"/>
    </location>
</feature>
<feature type="unsure residue" description="Proposed by authors" evidence="5">
    <location>
        <position position="105"/>
    </location>
</feature>
<feature type="unsure residue" description="K or E" evidence="5">
    <location>
        <position position="106"/>
    </location>
</feature>
<evidence type="ECO:0000255" key="1">
    <source>
        <dbReference type="PROSITE-ProRule" id="PRU00040"/>
    </source>
</evidence>
<evidence type="ECO:0000269" key="2">
    <source>
    </source>
</evidence>
<evidence type="ECO:0000303" key="3">
    <source>
    </source>
</evidence>
<evidence type="ECO:0000305" key="4"/>
<evidence type="ECO:0000305" key="5">
    <source>
    </source>
</evidence>
<comment type="function">
    <text evidence="2">The role of this hemagglutinin in the venom is unknown, because it is masked by the high venom hemolytic activity. Lectin with specificity to galactose. Induces hemagglutination.</text>
</comment>
<comment type="subcellular location">
    <subcellularLocation>
        <location evidence="2">Secreted</location>
    </subcellularLocation>
</comment>
<comment type="tissue specificity">
    <text evidence="5">Expressed by the venom gland.</text>
</comment>
<comment type="PTM">
    <text evidence="5">Glycosylated with a carbohydrate of 383 Da.</text>
</comment>
<comment type="mass spectrometry"/>
<comment type="miscellaneous">
    <text evidence="2">Others isoforms (Sp-CL 1-5) with similar chromatographic elution profiles, molecular masses and N-terminal sequences have been found in this venom.</text>
</comment>
<comment type="similarity">
    <text evidence="4">Belongs to the true venom lectin family.</text>
</comment>
<organism>
    <name type="scientific">Scorpaena plumieri</name>
    <name type="common">Spotted scorpionfish</name>
    <dbReference type="NCBI Taxonomy" id="274700"/>
    <lineage>
        <taxon>Eukaryota</taxon>
        <taxon>Metazoa</taxon>
        <taxon>Chordata</taxon>
        <taxon>Craniata</taxon>
        <taxon>Vertebrata</taxon>
        <taxon>Euteleostomi</taxon>
        <taxon>Actinopterygii</taxon>
        <taxon>Neopterygii</taxon>
        <taxon>Teleostei</taxon>
        <taxon>Neoteleostei</taxon>
        <taxon>Acanthomorphata</taxon>
        <taxon>Eupercaria</taxon>
        <taxon>Perciformes</taxon>
        <taxon>Scorpaenoidei</taxon>
        <taxon>Scorpaenidae</taxon>
        <taxon>Scorpaeninae</taxon>
        <taxon>Scorpaena</taxon>
    </lineage>
</organism>
<sequence>DAEPPSPAEECAAVKMESCGDDWLYIDENRKVKYFETPKTFQEAQDHCESEDGNLVAMHTEFQKYVVACLSWIYNHKLHRMWIGAGRSEGETQNIDGSDFDYAKWKGGQPDNFGGNEDCIEANFIDWGYLNDVECSEKLPFMCA</sequence>
<reference key="1">
    <citation type="journal article" date="2015" name="Toxicon">
        <title>Identification of C-type isolectins in the venom of the scorpionfish Scorpaena plumieri.</title>
        <authorList>
            <person name="Andrich F."/>
            <person name="Richardson M."/>
            <person name="Naumann G.B."/>
            <person name="Cordeiro M.N."/>
            <person name="Santos A.V."/>
            <person name="Santos D.M."/>
            <person name="Oliveira J.S."/>
            <person name="de Lima M.E."/>
            <person name="Figueiredo S.G."/>
        </authorList>
    </citation>
    <scope>PROTEIN SEQUENCE</scope>
    <scope>FUNCTION</scope>
    <scope>SUBCELLULAR LOCATION</scope>
    <scope>MASS SPECTROMETRY</scope>
    <source>
        <tissue>Venom</tissue>
    </source>
</reference>
<accession>P0DQV8</accession>
<protein>
    <recommendedName>
        <fullName evidence="3">C-type isolectin Sp-CL4</fullName>
    </recommendedName>
</protein>